<accession>T2KMG7</accession>
<keyword id="KW-0106">Calcium</keyword>
<keyword id="KW-1003">Cell membrane</keyword>
<keyword id="KW-0378">Hydrolase</keyword>
<keyword id="KW-0449">Lipoprotein</keyword>
<keyword id="KW-0472">Membrane</keyword>
<keyword id="KW-0479">Metal-binding</keyword>
<keyword id="KW-0564">Palmitate</keyword>
<keyword id="KW-1185">Reference proteome</keyword>
<keyword id="KW-0732">Signal</keyword>
<dbReference type="EC" id="3.1.6.-" evidence="3"/>
<dbReference type="EMBL" id="HG315671">
    <property type="protein sequence ID" value="CDF79920.1"/>
    <property type="molecule type" value="Genomic_DNA"/>
</dbReference>
<dbReference type="RefSeq" id="WP_051774714.1">
    <property type="nucleotide sequence ID" value="NZ_HG315671.1"/>
</dbReference>
<dbReference type="SMR" id="T2KMG7"/>
<dbReference type="STRING" id="1347342.BN863_22080"/>
<dbReference type="PATRIC" id="fig|1347342.6.peg.2215"/>
<dbReference type="eggNOG" id="COG3119">
    <property type="taxonomic scope" value="Bacteria"/>
</dbReference>
<dbReference type="HOGENOM" id="CLU_006332_9_3_10"/>
<dbReference type="OrthoDB" id="9815108at2"/>
<dbReference type="Proteomes" id="UP000016160">
    <property type="component" value="Chromosome"/>
</dbReference>
<dbReference type="GO" id="GO:0005886">
    <property type="term" value="C:plasma membrane"/>
    <property type="evidence" value="ECO:0007669"/>
    <property type="project" value="UniProtKB-SubCell"/>
</dbReference>
<dbReference type="GO" id="GO:0004065">
    <property type="term" value="F:arylsulfatase activity"/>
    <property type="evidence" value="ECO:0007669"/>
    <property type="project" value="TreeGrafter"/>
</dbReference>
<dbReference type="GO" id="GO:0046872">
    <property type="term" value="F:metal ion binding"/>
    <property type="evidence" value="ECO:0007669"/>
    <property type="project" value="UniProtKB-KW"/>
</dbReference>
<dbReference type="CDD" id="cd16034">
    <property type="entry name" value="sulfatase_like"/>
    <property type="match status" value="1"/>
</dbReference>
<dbReference type="Gene3D" id="3.30.1120.10">
    <property type="match status" value="1"/>
</dbReference>
<dbReference type="Gene3D" id="3.40.720.10">
    <property type="entry name" value="Alkaline Phosphatase, subunit A"/>
    <property type="match status" value="1"/>
</dbReference>
<dbReference type="InterPro" id="IPR017850">
    <property type="entry name" value="Alkaline_phosphatase_core_sf"/>
</dbReference>
<dbReference type="InterPro" id="IPR050738">
    <property type="entry name" value="Sulfatase"/>
</dbReference>
<dbReference type="InterPro" id="IPR000917">
    <property type="entry name" value="Sulfatase_N"/>
</dbReference>
<dbReference type="PANTHER" id="PTHR42693">
    <property type="entry name" value="ARYLSULFATASE FAMILY MEMBER"/>
    <property type="match status" value="1"/>
</dbReference>
<dbReference type="PANTHER" id="PTHR42693:SF53">
    <property type="entry name" value="ENDO-4-O-SULFATASE"/>
    <property type="match status" value="1"/>
</dbReference>
<dbReference type="Pfam" id="PF00884">
    <property type="entry name" value="Sulfatase"/>
    <property type="match status" value="1"/>
</dbReference>
<dbReference type="SUPFAM" id="SSF53649">
    <property type="entry name" value="Alkaline phosphatase-like"/>
    <property type="match status" value="1"/>
</dbReference>
<dbReference type="PROSITE" id="PS51257">
    <property type="entry name" value="PROKAR_LIPOPROTEIN"/>
    <property type="match status" value="1"/>
</dbReference>
<organism>
    <name type="scientific">Formosa agariphila (strain DSM 15362 / KCTC 12365 / LMG 23005 / KMM 3901 / M-2Alg 35-1)</name>
    <dbReference type="NCBI Taxonomy" id="1347342"/>
    <lineage>
        <taxon>Bacteria</taxon>
        <taxon>Pseudomonadati</taxon>
        <taxon>Bacteroidota</taxon>
        <taxon>Flavobacteriia</taxon>
        <taxon>Flavobacteriales</taxon>
        <taxon>Flavobacteriaceae</taxon>
        <taxon>Formosa</taxon>
    </lineage>
</organism>
<gene>
    <name type="ORF">BN863_22080</name>
</gene>
<evidence type="ECO:0000250" key="1">
    <source>
        <dbReference type="UniProtKB" id="P15289"/>
    </source>
</evidence>
<evidence type="ECO:0000255" key="2">
    <source>
        <dbReference type="PROSITE-ProRule" id="PRU00303"/>
    </source>
</evidence>
<evidence type="ECO:0000269" key="3">
    <source>
    </source>
</evidence>
<evidence type="ECO:0000303" key="4">
    <source>
    </source>
</evidence>
<evidence type="ECO:0000305" key="5"/>
<evidence type="ECO:0000305" key="6">
    <source>
    </source>
</evidence>
<comment type="function">
    <text evidence="3 6">Sulfatase involved in ulvan degradation (PubMed:31285597). Ulvan is the main polysaccharide component of the Ulvales (green seaweed) cell wall. It is composed of disaccharide building blocks comprising 3-sulfated rhamnose (Rha3S) linked to D-glucuronic acid (GlcA), L-iduronic acid (IduA), or D-xylose (Xyl) (Probable).</text>
</comment>
<comment type="cofactor">
    <cofactor evidence="1">
        <name>Ca(2+)</name>
        <dbReference type="ChEBI" id="CHEBI:29108"/>
    </cofactor>
    <text evidence="1">Binds 1 Ca(2+) ion per subunit.</text>
</comment>
<comment type="subcellular location">
    <subcellularLocation>
        <location evidence="2">Cell membrane</location>
        <topology evidence="2">Lipid-anchor</topology>
        <orientation evidence="6">Periplasmic side</orientation>
    </subcellularLocation>
</comment>
<comment type="induction">
    <text evidence="3">By ulvan.</text>
</comment>
<comment type="PTM">
    <text evidence="1">The conversion to 3-oxoalanine (also known as C-formylglycine, FGly), of a serine or cysteine residue in prokaryotes and of a cysteine residue in eukaryotes, is critical for catalytic activity. This post-translational modification is severely defective in multiple sulfatase deficiency (MSD).</text>
</comment>
<comment type="similarity">
    <text evidence="5">Belongs to the sulfatase family.</text>
</comment>
<sequence>MNFKQNIVYKKMAISMKITAIRPIALVISFTLLSCKDKVKTVEQQDEPTKPNIVYILTDQWRGAALGYAGDPNVKTPHLDALAKEAVNFTNAVSVTPVCTPHRASLLTGKYPITTGMFLNDLYLPSEELCMAEIFKAEGYNTAYWGKWHLDGHRRSAYTPKERRQGFDYWKALECSHDYNKMPYYDNDNPEVKYWGKYSPFAIVEDANTYLEKQAKDDTPFLAVVSIATPHFPHGSAPQKYKDMYSPESLILNPNVSPKFEARSREELQGYYAHATATDEAIGLLLKQMDALGLNENTIVVFSSDHGEMMGANDVRPFQKQVAWDESIRVPFLIKYPGIDKQKGVTVNAPINTPDILPSLLGLSNIKIPDGIEGEDLSELIKNPDPEADREALVMNVAPFAGGYPNLPYRAIRTKQYTYARTTEGPSMFFDNVADPYQQNNLLGKPEFETLQNELDAKLNKKLAELGDEFKSRDYYLKKYNYVFGKNKPAIPYWEFNNGKGEVQSPIPVTQ</sequence>
<name>PLH19_FORAG</name>
<proteinExistence type="evidence at protein level"/>
<reference key="1">
    <citation type="journal article" date="2013" name="Appl. Environ. Microbiol.">
        <title>The genome of the alga-associated marine flavobacterium Formosa agariphila KMM 3901T reveals a broad potential for degradation of algal polysaccharides.</title>
        <authorList>
            <person name="Mann A.J."/>
            <person name="Hahnke R.L."/>
            <person name="Huang S."/>
            <person name="Werner J."/>
            <person name="Xing P."/>
            <person name="Barbeyron T."/>
            <person name="Huettel B."/>
            <person name="Stueber K."/>
            <person name="Reinhardt R."/>
            <person name="Harder J."/>
            <person name="Gloeckner F.O."/>
            <person name="Amann R.I."/>
            <person name="Teeling H."/>
        </authorList>
    </citation>
    <scope>NUCLEOTIDE SEQUENCE [LARGE SCALE GENOMIC DNA]</scope>
    <source>
        <strain>DSM 15362 / KCTC 12365 / LMG 23005 / KMM 3901 / M-2Alg 35-1</strain>
    </source>
</reference>
<reference key="2">
    <citation type="journal article" date="2019" name="Nat. Chem. Biol.">
        <title>A marine bacterial enzymatic cascade degrades the algal polysaccharide ulvan.</title>
        <authorList>
            <person name="Reisky L."/>
            <person name="Prechoux A."/>
            <person name="Zuehlke M.K."/>
            <person name="Baeumgen M."/>
            <person name="Robb C.S."/>
            <person name="Gerlach N."/>
            <person name="Roret T."/>
            <person name="Stanetty C."/>
            <person name="Larocque R."/>
            <person name="Michel G."/>
            <person name="Song T."/>
            <person name="Markert S."/>
            <person name="Unfried F."/>
            <person name="Mihovilovic M.D."/>
            <person name="Trautwein-Schult A."/>
            <person name="Becher D."/>
            <person name="Schweder T."/>
            <person name="Bornscheuer U.T."/>
            <person name="Hehemann J.H."/>
        </authorList>
    </citation>
    <scope>FUNCTION</scope>
    <scope>CATALYTIC ACTIVITY</scope>
    <scope>SUBCELLULAR LOCATION</scope>
    <scope>INDUCTION</scope>
</reference>
<feature type="signal peptide" evidence="2">
    <location>
        <begin position="1"/>
        <end position="34"/>
    </location>
</feature>
<feature type="chain" id="PRO_0000448337" description="Ulvan-active sulfatase">
    <location>
        <begin position="35"/>
        <end position="511"/>
    </location>
</feature>
<feature type="active site" description="Nucleophile" evidence="1">
    <location>
        <position position="99"/>
    </location>
</feature>
<feature type="active site" evidence="1">
    <location>
        <position position="149"/>
    </location>
</feature>
<feature type="binding site" evidence="1">
    <location>
        <position position="59"/>
    </location>
    <ligand>
        <name>Ca(2+)</name>
        <dbReference type="ChEBI" id="CHEBI:29108"/>
    </ligand>
</feature>
<feature type="binding site" description="via 3-oxoalanine" evidence="1">
    <location>
        <position position="99"/>
    </location>
    <ligand>
        <name>Ca(2+)</name>
        <dbReference type="ChEBI" id="CHEBI:29108"/>
    </ligand>
</feature>
<feature type="binding site" evidence="1">
    <location>
        <position position="305"/>
    </location>
    <ligand>
        <name>Ca(2+)</name>
        <dbReference type="ChEBI" id="CHEBI:29108"/>
    </ligand>
</feature>
<feature type="modified residue" description="3-oxoalanine (Cys)" evidence="1">
    <location>
        <position position="99"/>
    </location>
</feature>
<feature type="lipid moiety-binding region" description="N-palmitoyl cysteine" evidence="2">
    <location>
        <position position="35"/>
    </location>
</feature>
<feature type="lipid moiety-binding region" description="S-diacylglycerol cysteine" evidence="2">
    <location>
        <position position="35"/>
    </location>
</feature>
<protein>
    <recommendedName>
        <fullName evidence="5">Ulvan-active sulfatase</fullName>
        <ecNumber evidence="3">3.1.6.-</ecNumber>
    </recommendedName>
    <alternativeName>
        <fullName evidence="4">Polysaccharide utilization locus H protein P19</fullName>
        <shortName>PUL H protein P19</shortName>
    </alternativeName>
    <alternativeName>
        <fullName evidence="5">Sulfatase family S1 subfamily 27 protein P19</fullName>
        <shortName evidence="4">P19_S1_27</shortName>
    </alternativeName>
</protein>